<organism>
    <name type="scientific">Spinacia oleracea</name>
    <name type="common">Spinach</name>
    <dbReference type="NCBI Taxonomy" id="3562"/>
    <lineage>
        <taxon>Eukaryota</taxon>
        <taxon>Viridiplantae</taxon>
        <taxon>Streptophyta</taxon>
        <taxon>Embryophyta</taxon>
        <taxon>Tracheophyta</taxon>
        <taxon>Spermatophyta</taxon>
        <taxon>Magnoliopsida</taxon>
        <taxon>eudicotyledons</taxon>
        <taxon>Gunneridae</taxon>
        <taxon>Pentapetalae</taxon>
        <taxon>Caryophyllales</taxon>
        <taxon>Chenopodiaceae</taxon>
        <taxon>Chenopodioideae</taxon>
        <taxon>Anserineae</taxon>
        <taxon>Spinacia</taxon>
    </lineage>
</organism>
<protein>
    <recommendedName>
        <fullName>Photosystem II reaction center W protein, chloroplastic</fullName>
    </recommendedName>
    <alternativeName>
        <fullName>PSII 6.1 kDa protein</fullName>
    </alternativeName>
</protein>
<dbReference type="EMBL" id="X85038">
    <property type="protein sequence ID" value="CAA59409.1"/>
    <property type="molecule type" value="mRNA"/>
</dbReference>
<dbReference type="PIR" id="S53025">
    <property type="entry name" value="S53025"/>
</dbReference>
<dbReference type="PDB" id="3JCU">
    <property type="method" value="EM"/>
    <property type="resolution" value="3.20 A"/>
    <property type="chains" value="W/w=1-137"/>
</dbReference>
<dbReference type="PDB" id="8Z9D">
    <property type="method" value="EM"/>
    <property type="resolution" value="3.22 A"/>
    <property type="chains" value="W/WW/Ww/w=1-137"/>
</dbReference>
<dbReference type="PDBsum" id="3JCU"/>
<dbReference type="PDBsum" id="8Z9D"/>
<dbReference type="EMDB" id="EMD-39860"/>
<dbReference type="SMR" id="Q41387"/>
<dbReference type="DIP" id="DIP-62027N"/>
<dbReference type="IntAct" id="Q41387">
    <property type="interactions" value="1"/>
</dbReference>
<dbReference type="OrthoDB" id="2017665at2759"/>
<dbReference type="Proteomes" id="UP001155700">
    <property type="component" value="Unplaced"/>
</dbReference>
<dbReference type="GO" id="GO:0009535">
    <property type="term" value="C:chloroplast thylakoid membrane"/>
    <property type="evidence" value="ECO:0007669"/>
    <property type="project" value="UniProtKB-SubCell"/>
</dbReference>
<dbReference type="GO" id="GO:0009523">
    <property type="term" value="C:photosystem II"/>
    <property type="evidence" value="ECO:0007669"/>
    <property type="project" value="UniProtKB-KW"/>
</dbReference>
<dbReference type="GO" id="GO:0015979">
    <property type="term" value="P:photosynthesis"/>
    <property type="evidence" value="ECO:0007669"/>
    <property type="project" value="UniProtKB-KW"/>
</dbReference>
<dbReference type="GO" id="GO:0042549">
    <property type="term" value="P:photosystem II stabilization"/>
    <property type="evidence" value="ECO:0000318"/>
    <property type="project" value="GO_Central"/>
</dbReference>
<dbReference type="InterPro" id="IPR009806">
    <property type="entry name" value="PSII_PsbW_class2"/>
</dbReference>
<dbReference type="PANTHER" id="PTHR34552">
    <property type="entry name" value="PHOTOSYSTEM II REACTION CENTER W PROTEIN, CHLOROPLASTIC"/>
    <property type="match status" value="1"/>
</dbReference>
<dbReference type="PANTHER" id="PTHR34552:SF1">
    <property type="entry name" value="PHOTOSYSTEM II REACTION CENTER W PROTEIN, CHLOROPLASTIC"/>
    <property type="match status" value="1"/>
</dbReference>
<dbReference type="Pfam" id="PF07123">
    <property type="entry name" value="PsbW"/>
    <property type="match status" value="1"/>
</dbReference>
<reference key="1">
    <citation type="journal article" date="1995" name="Proc. Natl. Acad. Sci. U.S.A.">
        <title>Molecular characterization of PsbW, a nuclear-encoded component of the photosystem II reaction center complex in spinach.</title>
        <authorList>
            <person name="Lorkovic Z.J."/>
            <person name="Schroeder W.P."/>
            <person name="Pakrasi H.B."/>
            <person name="Irrgang K.-D."/>
            <person name="Herrmann R.G."/>
            <person name="Oelmueller R."/>
        </authorList>
    </citation>
    <scope>NUCLEOTIDE SEQUENCE [MRNA]</scope>
    <scope>SUBUNIT</scope>
    <scope>SUBCELLULAR LOCATION</scope>
    <scope>DEVELOPMENTAL STAGE</scope>
    <scope>POSSIBLE TOPOLOGY</scope>
</reference>
<reference key="2">
    <citation type="journal article" date="1989" name="FEBS Lett.">
        <title>N-terminal sequencing of photosystem II low-molecular-mass proteins. 5 and 4.1 kDa components of the O2-evolving core complex from higher plants.</title>
        <authorList>
            <person name="Ikeuchi M."/>
            <person name="Takio K."/>
            <person name="Inoue Y."/>
        </authorList>
    </citation>
    <scope>PROTEIN SEQUENCE OF 84-103</scope>
    <scope>SUBUNIT</scope>
    <scope>SUBCELLULAR LOCATION</scope>
</reference>
<reference key="3">
    <citation type="journal article" date="1995" name="J. Biol. Chem.">
        <title>A nuclear-encoded subunit of the photosystem II reaction center.</title>
        <authorList>
            <person name="Irrgang K.-D."/>
            <person name="Shi L.X."/>
            <person name="Funk C."/>
            <person name="Schroder W.P."/>
        </authorList>
    </citation>
    <scope>PROTEIN SEQUENCE OF 84-102</scope>
    <scope>VARIANT GLN-89</scope>
    <scope>SUBUNIT</scope>
    <scope>SUBCELLULAR LOCATION</scope>
    <scope>POSSIBLE TOPOLOGY</scope>
</reference>
<reference key="4">
    <citation type="journal article" date="1988" name="FEBS Lett.">
        <title>Characterization of low molecular mass proteins of photosystem II by N-terminal sequencing.</title>
        <authorList>
            <person name="Schroeder W.P."/>
            <person name="Henrysson T."/>
            <person name="Aakerlund H.-E."/>
        </authorList>
    </citation>
    <scope>PROTEIN SEQUENCE OF 84-95</scope>
    <scope>SUBUNIT</scope>
    <scope>SUBCELLULAR LOCATION</scope>
</reference>
<reference key="5">
    <citation type="journal article" date="1998" name="J. Biol. Chem.">
        <title>Isolation and characterization of monomeric and dimeric CP47-reaction center photosystem II complexes.</title>
        <authorList>
            <person name="Zheleva D."/>
            <person name="Sharma J."/>
            <person name="Panico M."/>
            <person name="Morris H.R."/>
            <person name="Barber J."/>
        </authorList>
    </citation>
    <scope>PROTEIN SEQUENCE OF 84-91</scope>
    <scope>SUBUNIT</scope>
    <scope>SUBCELLULAR LOCATION</scope>
    <scope>MASS SPECTROMETRY</scope>
</reference>
<sequence length="137" mass="14177">MATITASSSASLVARASLVHNSRVGVSSSPILGLPSMTKRSKVTCSIENKPSTTETTTTTNKSMGASLLAAAAAATISNPAMALVDERMSTEGTGLPFGLSNNLLGWILFGVFGLIWALYFVYASGLEEDEESGLSL</sequence>
<gene>
    <name evidence="8" type="primary">psbW</name>
</gene>
<evidence type="ECO:0000250" key="1">
    <source>
        <dbReference type="UniProtKB" id="Q39194"/>
    </source>
</evidence>
<evidence type="ECO:0000255" key="2"/>
<evidence type="ECO:0000269" key="3">
    <source>
    </source>
</evidence>
<evidence type="ECO:0000269" key="4">
    <source>
    </source>
</evidence>
<evidence type="ECO:0000269" key="5">
    <source>
    </source>
</evidence>
<evidence type="ECO:0000269" key="6">
    <source>
    </source>
</evidence>
<evidence type="ECO:0000269" key="7">
    <source ref="4"/>
</evidence>
<evidence type="ECO:0000303" key="8">
    <source>
    </source>
</evidence>
<evidence type="ECO:0000305" key="9"/>
<evidence type="ECO:0000305" key="10">
    <source>
    </source>
</evidence>
<evidence type="ECO:0000305" key="11">
    <source>
    </source>
</evidence>
<evidence type="ECO:0007829" key="12">
    <source>
        <dbReference type="PDB" id="3JCU"/>
    </source>
</evidence>
<feature type="transit peptide" description="Chloroplast" evidence="2">
    <location>
        <begin position="1"/>
        <end position="64"/>
    </location>
</feature>
<feature type="transit peptide" description="Thylakoid" evidence="3 5 6 7">
    <location>
        <begin position="65"/>
        <end position="83"/>
    </location>
</feature>
<feature type="chain" id="PRO_0000005340" description="Photosystem II reaction center W protein, chloroplastic">
    <location>
        <begin position="84"/>
        <end position="137"/>
    </location>
</feature>
<feature type="topological domain" description="Lumenal, thylakoid" evidence="10 11">
    <location>
        <begin position="84"/>
        <end position="103"/>
    </location>
</feature>
<feature type="transmembrane region" description="Helical" evidence="2">
    <location>
        <begin position="104"/>
        <end position="123"/>
    </location>
</feature>
<feature type="topological domain" description="Stromal" evidence="10 11">
    <location>
        <begin position="124"/>
        <end position="137"/>
    </location>
</feature>
<feature type="sequence variant" evidence="5">
    <original>M</original>
    <variation>Q</variation>
    <location>
        <position position="89"/>
    </location>
</feature>
<feature type="sequence conflict" description="In Ref. 3; AA sequence." evidence="9" ref="3">
    <original>S</original>
    <variation>M</variation>
    <location>
        <position position="101"/>
    </location>
</feature>
<feature type="strand" evidence="12">
    <location>
        <begin position="97"/>
        <end position="99"/>
    </location>
</feature>
<feature type="helix" evidence="12">
    <location>
        <begin position="103"/>
        <end position="124"/>
    </location>
</feature>
<accession>Q41387</accession>
<accession>Q9S8E2</accession>
<comment type="function">
    <text evidence="1">Stabilizes dimeric photosystem II (PSII). In its absence no dimeric PSII accumulates and there is a reduction of monomeric PSII (By similarity).</text>
</comment>
<comment type="subunit">
    <text evidence="3 5 6 7">Part of the photosystem II complex. PSII is composed of 1 copy each of membrane proteins PsbA, PsbB, PsbC, PsbD, numerous small proteins, at least 3 peripheral proteins of the oxygen-evolving complex and a large number of cofactors. It forms dimeric complexes.</text>
</comment>
<comment type="subcellular location">
    <subcellularLocation>
        <location evidence="3 5 6 7">Plastid</location>
        <location evidence="3 5 6 7">Chloroplast thylakoid membrane</location>
        <topology evidence="5 10">Single-pass membrane protein</topology>
    </subcellularLocation>
    <text evidence="10">The N-terminus is found within the thylakoid lumen (PubMed:7568046, PubMed:7615565).</text>
</comment>
<comment type="developmental stage">
    <text evidence="4">Found in etioplastic PSII (i.e. before PSII is fully assembled and functional).</text>
</comment>
<comment type="mass spectrometry" mass="5927.4" method="MALDI" evidence="6"/>
<comment type="similarity">
    <text evidence="9">Belongs to the psbW family.</text>
</comment>
<proteinExistence type="evidence at protein level"/>
<name>PSBW_SPIOL</name>
<keyword id="KW-0002">3D-structure</keyword>
<keyword id="KW-0150">Chloroplast</keyword>
<keyword id="KW-0903">Direct protein sequencing</keyword>
<keyword id="KW-0472">Membrane</keyword>
<keyword id="KW-0602">Photosynthesis</keyword>
<keyword id="KW-0604">Photosystem II</keyword>
<keyword id="KW-0934">Plastid</keyword>
<keyword id="KW-1185">Reference proteome</keyword>
<keyword id="KW-0793">Thylakoid</keyword>
<keyword id="KW-0809">Transit peptide</keyword>
<keyword id="KW-0812">Transmembrane</keyword>
<keyword id="KW-1133">Transmembrane helix</keyword>